<name>HSLO_STAAS</name>
<evidence type="ECO:0000255" key="1">
    <source>
        <dbReference type="HAMAP-Rule" id="MF_00117"/>
    </source>
</evidence>
<protein>
    <recommendedName>
        <fullName evidence="1">33 kDa chaperonin</fullName>
    </recommendedName>
    <alternativeName>
        <fullName evidence="1">Heat shock protein 33 homolog</fullName>
        <shortName evidence="1">HSP33</shortName>
    </alternativeName>
</protein>
<feature type="chain" id="PRO_0000192203" description="33 kDa chaperonin">
    <location>
        <begin position="1"/>
        <end position="293"/>
    </location>
</feature>
<feature type="disulfide bond" description="Redox-active" evidence="1">
    <location>
        <begin position="238"/>
        <end position="240"/>
    </location>
</feature>
<feature type="disulfide bond" description="Redox-active" evidence="1">
    <location>
        <begin position="271"/>
        <end position="274"/>
    </location>
</feature>
<keyword id="KW-0143">Chaperone</keyword>
<keyword id="KW-0963">Cytoplasm</keyword>
<keyword id="KW-1015">Disulfide bond</keyword>
<keyword id="KW-0676">Redox-active center</keyword>
<keyword id="KW-0862">Zinc</keyword>
<sequence>MTHDYIVKALAFDGEIRAYAALTTETVQEAQTRHYTWPTASAAMGRTMTATAMMGAMLKGDQKLTVTVDGQGPIGRIIADANAKGEVRAYVDHPQTHFPLNEQGKLDVRRAVGTNGSIMVVKDVGMKDYFSGASPIVSGELGEDFTYYYATSEQTPSSVGLGVLVNPDNTIKAAGGFIIQVMPGAKDETISKLEKAISEMTPVSKLIEQGLTPEGLLNEILGEDHVQILEKMPVQFECNCSHEKFLNAIKGLGEAEIQNMIKEDHGAEAVCHFCGNKYKYTEEELNVLLESLA</sequence>
<dbReference type="EMBL" id="BX571857">
    <property type="protein sequence ID" value="CAG42244.1"/>
    <property type="molecule type" value="Genomic_DNA"/>
</dbReference>
<dbReference type="RefSeq" id="WP_000148605.1">
    <property type="nucleotide sequence ID" value="NC_002953.3"/>
</dbReference>
<dbReference type="SMR" id="Q6GBX6"/>
<dbReference type="KEGG" id="sas:SAS0469"/>
<dbReference type="HOGENOM" id="CLU_054493_1_0_9"/>
<dbReference type="GO" id="GO:0005737">
    <property type="term" value="C:cytoplasm"/>
    <property type="evidence" value="ECO:0007669"/>
    <property type="project" value="UniProtKB-SubCell"/>
</dbReference>
<dbReference type="GO" id="GO:0044183">
    <property type="term" value="F:protein folding chaperone"/>
    <property type="evidence" value="ECO:0007669"/>
    <property type="project" value="TreeGrafter"/>
</dbReference>
<dbReference type="GO" id="GO:0051082">
    <property type="term" value="F:unfolded protein binding"/>
    <property type="evidence" value="ECO:0007669"/>
    <property type="project" value="UniProtKB-UniRule"/>
</dbReference>
<dbReference type="GO" id="GO:0042026">
    <property type="term" value="P:protein refolding"/>
    <property type="evidence" value="ECO:0007669"/>
    <property type="project" value="TreeGrafter"/>
</dbReference>
<dbReference type="CDD" id="cd00498">
    <property type="entry name" value="Hsp33"/>
    <property type="match status" value="1"/>
</dbReference>
<dbReference type="Gene3D" id="3.55.30.10">
    <property type="entry name" value="Hsp33 domain"/>
    <property type="match status" value="1"/>
</dbReference>
<dbReference type="Gene3D" id="3.90.1280.10">
    <property type="entry name" value="HSP33 redox switch-like"/>
    <property type="match status" value="1"/>
</dbReference>
<dbReference type="HAMAP" id="MF_00117">
    <property type="entry name" value="HslO"/>
    <property type="match status" value="1"/>
</dbReference>
<dbReference type="InterPro" id="IPR000397">
    <property type="entry name" value="Heat_shock_Hsp33"/>
</dbReference>
<dbReference type="InterPro" id="IPR016154">
    <property type="entry name" value="Heat_shock_Hsp33_C"/>
</dbReference>
<dbReference type="InterPro" id="IPR016153">
    <property type="entry name" value="Heat_shock_Hsp33_N"/>
</dbReference>
<dbReference type="NCBIfam" id="NF001033">
    <property type="entry name" value="PRK00114.1"/>
    <property type="match status" value="1"/>
</dbReference>
<dbReference type="PANTHER" id="PTHR30111">
    <property type="entry name" value="33 KDA CHAPERONIN"/>
    <property type="match status" value="1"/>
</dbReference>
<dbReference type="PANTHER" id="PTHR30111:SF1">
    <property type="entry name" value="33 KDA CHAPERONIN"/>
    <property type="match status" value="1"/>
</dbReference>
<dbReference type="Pfam" id="PF01430">
    <property type="entry name" value="HSP33"/>
    <property type="match status" value="1"/>
</dbReference>
<dbReference type="PIRSF" id="PIRSF005261">
    <property type="entry name" value="Heat_shock_Hsp33"/>
    <property type="match status" value="1"/>
</dbReference>
<dbReference type="SUPFAM" id="SSF64397">
    <property type="entry name" value="Hsp33 domain"/>
    <property type="match status" value="1"/>
</dbReference>
<dbReference type="SUPFAM" id="SSF118352">
    <property type="entry name" value="HSP33 redox switch-like"/>
    <property type="match status" value="1"/>
</dbReference>
<gene>
    <name evidence="1" type="primary">hslO</name>
    <name type="ordered locus">SAS0469</name>
</gene>
<organism>
    <name type="scientific">Staphylococcus aureus (strain MSSA476)</name>
    <dbReference type="NCBI Taxonomy" id="282459"/>
    <lineage>
        <taxon>Bacteria</taxon>
        <taxon>Bacillati</taxon>
        <taxon>Bacillota</taxon>
        <taxon>Bacilli</taxon>
        <taxon>Bacillales</taxon>
        <taxon>Staphylococcaceae</taxon>
        <taxon>Staphylococcus</taxon>
    </lineage>
</organism>
<comment type="function">
    <text evidence="1">Redox regulated molecular chaperone. Protects both thermally unfolding and oxidatively damaged proteins from irreversible aggregation. Plays an important role in the bacterial defense system toward oxidative stress.</text>
</comment>
<comment type="subcellular location">
    <subcellularLocation>
        <location evidence="1">Cytoplasm</location>
    </subcellularLocation>
</comment>
<comment type="PTM">
    <text evidence="1">Under oxidizing conditions two disulfide bonds are formed involving the reactive cysteines. Under reducing conditions zinc is bound to the reactive cysteines and the protein is inactive.</text>
</comment>
<comment type="similarity">
    <text evidence="1">Belongs to the HSP33 family.</text>
</comment>
<accession>Q6GBX6</accession>
<reference key="1">
    <citation type="journal article" date="2004" name="Proc. Natl. Acad. Sci. U.S.A.">
        <title>Complete genomes of two clinical Staphylococcus aureus strains: evidence for the rapid evolution of virulence and drug resistance.</title>
        <authorList>
            <person name="Holden M.T.G."/>
            <person name="Feil E.J."/>
            <person name="Lindsay J.A."/>
            <person name="Peacock S.J."/>
            <person name="Day N.P.J."/>
            <person name="Enright M.C."/>
            <person name="Foster T.J."/>
            <person name="Moore C.E."/>
            <person name="Hurst L."/>
            <person name="Atkin R."/>
            <person name="Barron A."/>
            <person name="Bason N."/>
            <person name="Bentley S.D."/>
            <person name="Chillingworth C."/>
            <person name="Chillingworth T."/>
            <person name="Churcher C."/>
            <person name="Clark L."/>
            <person name="Corton C."/>
            <person name="Cronin A."/>
            <person name="Doggett J."/>
            <person name="Dowd L."/>
            <person name="Feltwell T."/>
            <person name="Hance Z."/>
            <person name="Harris B."/>
            <person name="Hauser H."/>
            <person name="Holroyd S."/>
            <person name="Jagels K."/>
            <person name="James K.D."/>
            <person name="Lennard N."/>
            <person name="Line A."/>
            <person name="Mayes R."/>
            <person name="Moule S."/>
            <person name="Mungall K."/>
            <person name="Ormond D."/>
            <person name="Quail M.A."/>
            <person name="Rabbinowitsch E."/>
            <person name="Rutherford K.M."/>
            <person name="Sanders M."/>
            <person name="Sharp S."/>
            <person name="Simmonds M."/>
            <person name="Stevens K."/>
            <person name="Whitehead S."/>
            <person name="Barrell B.G."/>
            <person name="Spratt B.G."/>
            <person name="Parkhill J."/>
        </authorList>
    </citation>
    <scope>NUCLEOTIDE SEQUENCE [LARGE SCALE GENOMIC DNA]</scope>
    <source>
        <strain>MSSA476</strain>
    </source>
</reference>
<proteinExistence type="inferred from homology"/>